<protein>
    <recommendedName>
        <fullName evidence="2">Large ribosomal subunit protein bL20c</fullName>
    </recommendedName>
    <alternativeName>
        <fullName>50S ribosomal protein L20, chloroplastic</fullName>
    </alternativeName>
</protein>
<dbReference type="EMBL" id="AB001684">
    <property type="protein sequence ID" value="BAA57880.1"/>
    <property type="molecule type" value="Genomic_DNA"/>
</dbReference>
<dbReference type="PIR" id="T07233">
    <property type="entry name" value="T07233"/>
</dbReference>
<dbReference type="RefSeq" id="NP_045805.1">
    <property type="nucleotide sequence ID" value="NC_001865.1"/>
</dbReference>
<dbReference type="SMR" id="P56352"/>
<dbReference type="GeneID" id="809140"/>
<dbReference type="GO" id="GO:0009507">
    <property type="term" value="C:chloroplast"/>
    <property type="evidence" value="ECO:0007669"/>
    <property type="project" value="UniProtKB-SubCell"/>
</dbReference>
<dbReference type="GO" id="GO:1990904">
    <property type="term" value="C:ribonucleoprotein complex"/>
    <property type="evidence" value="ECO:0007669"/>
    <property type="project" value="UniProtKB-KW"/>
</dbReference>
<dbReference type="GO" id="GO:0005840">
    <property type="term" value="C:ribosome"/>
    <property type="evidence" value="ECO:0007669"/>
    <property type="project" value="UniProtKB-KW"/>
</dbReference>
<dbReference type="GO" id="GO:0019843">
    <property type="term" value="F:rRNA binding"/>
    <property type="evidence" value="ECO:0007669"/>
    <property type="project" value="UniProtKB-UniRule"/>
</dbReference>
<dbReference type="GO" id="GO:0003735">
    <property type="term" value="F:structural constituent of ribosome"/>
    <property type="evidence" value="ECO:0007669"/>
    <property type="project" value="InterPro"/>
</dbReference>
<dbReference type="GO" id="GO:0000027">
    <property type="term" value="P:ribosomal large subunit assembly"/>
    <property type="evidence" value="ECO:0007669"/>
    <property type="project" value="UniProtKB-UniRule"/>
</dbReference>
<dbReference type="GO" id="GO:0006412">
    <property type="term" value="P:translation"/>
    <property type="evidence" value="ECO:0007669"/>
    <property type="project" value="InterPro"/>
</dbReference>
<dbReference type="CDD" id="cd07026">
    <property type="entry name" value="Ribosomal_L20"/>
    <property type="match status" value="1"/>
</dbReference>
<dbReference type="FunFam" id="1.10.1900.20:FF:000001">
    <property type="entry name" value="50S ribosomal protein L20"/>
    <property type="match status" value="1"/>
</dbReference>
<dbReference type="Gene3D" id="6.10.160.10">
    <property type="match status" value="1"/>
</dbReference>
<dbReference type="Gene3D" id="1.10.1900.20">
    <property type="entry name" value="Ribosomal protein L20"/>
    <property type="match status" value="1"/>
</dbReference>
<dbReference type="HAMAP" id="MF_00382">
    <property type="entry name" value="Ribosomal_bL20"/>
    <property type="match status" value="1"/>
</dbReference>
<dbReference type="InterPro" id="IPR005813">
    <property type="entry name" value="Ribosomal_bL20"/>
</dbReference>
<dbReference type="InterPro" id="IPR049946">
    <property type="entry name" value="RIBOSOMAL_L20_CS"/>
</dbReference>
<dbReference type="InterPro" id="IPR035566">
    <property type="entry name" value="Ribosomal_protein_bL20_C"/>
</dbReference>
<dbReference type="NCBIfam" id="TIGR01032">
    <property type="entry name" value="rplT_bact"/>
    <property type="match status" value="1"/>
</dbReference>
<dbReference type="PANTHER" id="PTHR10986">
    <property type="entry name" value="39S RIBOSOMAL PROTEIN L20"/>
    <property type="match status" value="1"/>
</dbReference>
<dbReference type="Pfam" id="PF00453">
    <property type="entry name" value="Ribosomal_L20"/>
    <property type="match status" value="1"/>
</dbReference>
<dbReference type="PRINTS" id="PR00062">
    <property type="entry name" value="RIBOSOMALL20"/>
</dbReference>
<dbReference type="SUPFAM" id="SSF74731">
    <property type="entry name" value="Ribosomal protein L20"/>
    <property type="match status" value="1"/>
</dbReference>
<dbReference type="PROSITE" id="PS00937">
    <property type="entry name" value="RIBOSOMAL_L20"/>
    <property type="match status" value="1"/>
</dbReference>
<geneLocation type="chloroplast"/>
<comment type="function">
    <text evidence="1">Binds directly to 23S ribosomal RNA and is necessary for the in vitro assembly process of the 50S ribosomal subunit. It is not involved in the protein synthesizing functions of that subunit (By similarity).</text>
</comment>
<comment type="subcellular location">
    <subcellularLocation>
        <location>Plastid</location>
        <location>Chloroplast</location>
    </subcellularLocation>
</comment>
<comment type="similarity">
    <text evidence="2">Belongs to the bacterial ribosomal protein bL20 family.</text>
</comment>
<reference key="1">
    <citation type="journal article" date="1997" name="Proc. Natl. Acad. Sci. U.S.A.">
        <title>Complete nucleotide sequence of the chloroplast genome from the green alga Chlorella vulgaris: the existence of genes possibly involved in chloroplast division.</title>
        <authorList>
            <person name="Wakasugi T."/>
            <person name="Nagai T."/>
            <person name="Kapoor M."/>
            <person name="Sugita M."/>
            <person name="Ito M."/>
            <person name="Ito S."/>
            <person name="Tsudzuki J."/>
            <person name="Nakashima K."/>
            <person name="Tsudzuki T."/>
            <person name="Suzuki Y."/>
            <person name="Hamada A."/>
            <person name="Ohta T."/>
            <person name="Inamura A."/>
            <person name="Yoshinaga K."/>
            <person name="Sugiura M."/>
        </authorList>
    </citation>
    <scope>NUCLEOTIDE SEQUENCE [LARGE SCALE GENOMIC DNA]</scope>
    <source>
        <strain>IAM C-27 / Tamiya</strain>
    </source>
</reference>
<sequence>MTRVKRGNVARKRRKQVLNLASGFRGSSSRLFRTAQQQTMKALSYSYRDRQQKKREFCGLWVTRLNAAARLYGLNYTNFRHNLKKAGIQLNRKVLSQVALRDKQAFEQLILLVKD</sequence>
<gene>
    <name type="primary">rpl20</name>
</gene>
<organism>
    <name type="scientific">Chlorella vulgaris</name>
    <name type="common">Green alga</name>
    <dbReference type="NCBI Taxonomy" id="3077"/>
    <lineage>
        <taxon>Eukaryota</taxon>
        <taxon>Viridiplantae</taxon>
        <taxon>Chlorophyta</taxon>
        <taxon>core chlorophytes</taxon>
        <taxon>Trebouxiophyceae</taxon>
        <taxon>Chlorellales</taxon>
        <taxon>Chlorellaceae</taxon>
        <taxon>Chlorella clade</taxon>
        <taxon>Chlorella</taxon>
    </lineage>
</organism>
<accession>P56352</accession>
<name>RK20_CHLVU</name>
<evidence type="ECO:0000250" key="1"/>
<evidence type="ECO:0000305" key="2"/>
<proteinExistence type="inferred from homology"/>
<feature type="initiator methionine" description="Removed" evidence="1">
    <location>
        <position position="1"/>
    </location>
</feature>
<feature type="chain" id="PRO_0000177284" description="Large ribosomal subunit protein bL20c">
    <location>
        <begin position="2"/>
        <end position="115"/>
    </location>
</feature>
<keyword id="KW-0150">Chloroplast</keyword>
<keyword id="KW-0934">Plastid</keyword>
<keyword id="KW-0687">Ribonucleoprotein</keyword>
<keyword id="KW-0689">Ribosomal protein</keyword>
<keyword id="KW-0694">RNA-binding</keyword>
<keyword id="KW-0699">rRNA-binding</keyword>